<comment type="subcellular location">
    <subcellularLocation>
        <location evidence="1">Cytoplasm</location>
    </subcellularLocation>
    <subcellularLocation>
        <location evidence="1">Nucleus</location>
    </subcellularLocation>
</comment>
<proteinExistence type="predicted"/>
<protein>
    <recommendedName>
        <fullName>Uncharacterized protein C3B8.11</fullName>
    </recommendedName>
</protein>
<reference key="1">
    <citation type="journal article" date="2002" name="Nature">
        <title>The genome sequence of Schizosaccharomyces pombe.</title>
        <authorList>
            <person name="Wood V."/>
            <person name="Gwilliam R."/>
            <person name="Rajandream M.A."/>
            <person name="Lyne M.H."/>
            <person name="Lyne R."/>
            <person name="Stewart A."/>
            <person name="Sgouros J.G."/>
            <person name="Peat N."/>
            <person name="Hayles J."/>
            <person name="Baker S.G."/>
            <person name="Basham D."/>
            <person name="Bowman S."/>
            <person name="Brooks K."/>
            <person name="Brown D."/>
            <person name="Brown S."/>
            <person name="Chillingworth T."/>
            <person name="Churcher C.M."/>
            <person name="Collins M."/>
            <person name="Connor R."/>
            <person name="Cronin A."/>
            <person name="Davis P."/>
            <person name="Feltwell T."/>
            <person name="Fraser A."/>
            <person name="Gentles S."/>
            <person name="Goble A."/>
            <person name="Hamlin N."/>
            <person name="Harris D.E."/>
            <person name="Hidalgo J."/>
            <person name="Hodgson G."/>
            <person name="Holroyd S."/>
            <person name="Hornsby T."/>
            <person name="Howarth S."/>
            <person name="Huckle E.J."/>
            <person name="Hunt S."/>
            <person name="Jagels K."/>
            <person name="James K.D."/>
            <person name="Jones L."/>
            <person name="Jones M."/>
            <person name="Leather S."/>
            <person name="McDonald S."/>
            <person name="McLean J."/>
            <person name="Mooney P."/>
            <person name="Moule S."/>
            <person name="Mungall K.L."/>
            <person name="Murphy L.D."/>
            <person name="Niblett D."/>
            <person name="Odell C."/>
            <person name="Oliver K."/>
            <person name="O'Neil S."/>
            <person name="Pearson D."/>
            <person name="Quail M.A."/>
            <person name="Rabbinowitsch E."/>
            <person name="Rutherford K.M."/>
            <person name="Rutter S."/>
            <person name="Saunders D."/>
            <person name="Seeger K."/>
            <person name="Sharp S."/>
            <person name="Skelton J."/>
            <person name="Simmonds M.N."/>
            <person name="Squares R."/>
            <person name="Squares S."/>
            <person name="Stevens K."/>
            <person name="Taylor K."/>
            <person name="Taylor R.G."/>
            <person name="Tivey A."/>
            <person name="Walsh S.V."/>
            <person name="Warren T."/>
            <person name="Whitehead S."/>
            <person name="Woodward J.R."/>
            <person name="Volckaert G."/>
            <person name="Aert R."/>
            <person name="Robben J."/>
            <person name="Grymonprez B."/>
            <person name="Weltjens I."/>
            <person name="Vanstreels E."/>
            <person name="Rieger M."/>
            <person name="Schaefer M."/>
            <person name="Mueller-Auer S."/>
            <person name="Gabel C."/>
            <person name="Fuchs M."/>
            <person name="Duesterhoeft A."/>
            <person name="Fritzc C."/>
            <person name="Holzer E."/>
            <person name="Moestl D."/>
            <person name="Hilbert H."/>
            <person name="Borzym K."/>
            <person name="Langer I."/>
            <person name="Beck A."/>
            <person name="Lehrach H."/>
            <person name="Reinhardt R."/>
            <person name="Pohl T.M."/>
            <person name="Eger P."/>
            <person name="Zimmermann W."/>
            <person name="Wedler H."/>
            <person name="Wambutt R."/>
            <person name="Purnelle B."/>
            <person name="Goffeau A."/>
            <person name="Cadieu E."/>
            <person name="Dreano S."/>
            <person name="Gloux S."/>
            <person name="Lelaure V."/>
            <person name="Mottier S."/>
            <person name="Galibert F."/>
            <person name="Aves S.J."/>
            <person name="Xiang Z."/>
            <person name="Hunt C."/>
            <person name="Moore K."/>
            <person name="Hurst S.M."/>
            <person name="Lucas M."/>
            <person name="Rochet M."/>
            <person name="Gaillardin C."/>
            <person name="Tallada V.A."/>
            <person name="Garzon A."/>
            <person name="Thode G."/>
            <person name="Daga R.R."/>
            <person name="Cruzado L."/>
            <person name="Jimenez J."/>
            <person name="Sanchez M."/>
            <person name="del Rey F."/>
            <person name="Benito J."/>
            <person name="Dominguez A."/>
            <person name="Revuelta J.L."/>
            <person name="Moreno S."/>
            <person name="Armstrong J."/>
            <person name="Forsburg S.L."/>
            <person name="Cerutti L."/>
            <person name="Lowe T."/>
            <person name="McCombie W.R."/>
            <person name="Paulsen I."/>
            <person name="Potashkin J."/>
            <person name="Shpakovski G.V."/>
            <person name="Ussery D."/>
            <person name="Barrell B.G."/>
            <person name="Nurse P."/>
        </authorList>
    </citation>
    <scope>NUCLEOTIDE SEQUENCE [LARGE SCALE GENOMIC DNA]</scope>
    <source>
        <strain>972 / ATCC 24843</strain>
    </source>
</reference>
<reference key="2">
    <citation type="journal article" date="2006" name="Nat. Biotechnol.">
        <title>ORFeome cloning and global analysis of protein localization in the fission yeast Schizosaccharomyces pombe.</title>
        <authorList>
            <person name="Matsuyama A."/>
            <person name="Arai R."/>
            <person name="Yashiroda Y."/>
            <person name="Shirai A."/>
            <person name="Kamata A."/>
            <person name="Sekido S."/>
            <person name="Kobayashi Y."/>
            <person name="Hashimoto A."/>
            <person name="Hamamoto M."/>
            <person name="Hiraoka Y."/>
            <person name="Horinouchi S."/>
            <person name="Yoshida M."/>
        </authorList>
    </citation>
    <scope>SUBCELLULAR LOCATION [LARGE SCALE ANALYSIS]</scope>
</reference>
<evidence type="ECO:0000269" key="1">
    <source>
    </source>
</evidence>
<feature type="chain" id="PRO_0000303929" description="Uncharacterized protein C3B8.11">
    <location>
        <begin position="1"/>
        <end position="868"/>
    </location>
</feature>
<sequence>MSTWPIDAISKKPSVSLDYGIIGACQLLNPSGYHRAEKVENNEWTFARYDSYTGVELVDLDKRWDILSLNPNYKLPKLTELPAEATNSTRKATSSSFGLSVCRYVPRNLFSTLAKESQLASSAESIYNPHILNTFCLGKTAPSDKNRYTTTECLACSKISNETAENLLFLCLSSPWIFRASPTLQNTATFEEFPFYLNVSAFEFAEDPIWKFSQPVRQLVFSNGEPSLLFALSSCELVIFQVTYDLMFLDEPNTPGCLSAIPLRFLYADDVYNSDSFANVSVHPTDNSFFLTTSSSGRWTIWQFLDDGYRECFGSSFKESLQQALCSAPTSSIAYHEEEINPDNTIYRAKWEEYFGGVILHNAFFILHVSLGEVPDFHLLFHCSSDVRILQVVNESMPIKSEFFILTTESVLWMDIQHPQKPLLEWKHNRKLDPTLKITVTATFSQNIYVSVYSQMNGVVQQIHFSKDRALPVSGSHPFLLLNEVQVPIRSLIIQPCYFFESSEFDRQGPFDSPFWSAIIDKADGSLSLHILCEKSSLKIYNLEELTGSSQVAMKFKTITPSVNTSEDDSANDQEIISTPNSDFQQLSLSRLYHVLCSNRNKKNTITLDEFASKVPDFVEAFDSINHDVIITLSELYDGFPLKGTFTNVAEIISHLEGTELSFYFPYMFGINYNNASFFYTSVDSIASLIHRRWESNTDKSVEIPCFQSSQRRSIKNVIHYLFLSSIGVSREKIFDPSLSRKEIDSTDLLTFIKPFYDTEGLELNEDVRNILENWEIGKISSTYVIGDSAVETEDPSSSQFSDFYISQQQSSVLPSSQIATVFSQEDVPNFSSLYSESSSQTIPIMSQVVSGKYGSRPSKKKKKRSGF</sequence>
<gene>
    <name type="ORF">SPBC3B8.11</name>
</gene>
<name>YBHB_SCHPO</name>
<accession>O59719</accession>
<keyword id="KW-0963">Cytoplasm</keyword>
<keyword id="KW-0539">Nucleus</keyword>
<keyword id="KW-1185">Reference proteome</keyword>
<organism>
    <name type="scientific">Schizosaccharomyces pombe (strain 972 / ATCC 24843)</name>
    <name type="common">Fission yeast</name>
    <dbReference type="NCBI Taxonomy" id="284812"/>
    <lineage>
        <taxon>Eukaryota</taxon>
        <taxon>Fungi</taxon>
        <taxon>Dikarya</taxon>
        <taxon>Ascomycota</taxon>
        <taxon>Taphrinomycotina</taxon>
        <taxon>Schizosaccharomycetes</taxon>
        <taxon>Schizosaccharomycetales</taxon>
        <taxon>Schizosaccharomycetaceae</taxon>
        <taxon>Schizosaccharomyces</taxon>
    </lineage>
</organism>
<dbReference type="EMBL" id="CU329671">
    <property type="protein sequence ID" value="CAA18300.1"/>
    <property type="molecule type" value="Genomic_DNA"/>
</dbReference>
<dbReference type="PIR" id="T40329">
    <property type="entry name" value="T40329"/>
</dbReference>
<dbReference type="BioGRID" id="277467">
    <property type="interactions" value="1"/>
</dbReference>
<dbReference type="FunCoup" id="O59719">
    <property type="interactions" value="58"/>
</dbReference>
<dbReference type="IntAct" id="O59719">
    <property type="interactions" value="1"/>
</dbReference>
<dbReference type="STRING" id="284812.O59719"/>
<dbReference type="PaxDb" id="4896-SPBC3B8.11.1"/>
<dbReference type="EnsemblFungi" id="SPBC3B8.11.1">
    <property type="protein sequence ID" value="SPBC3B8.11.1:pep"/>
    <property type="gene ID" value="SPBC3B8.11"/>
</dbReference>
<dbReference type="KEGG" id="spo:2540951"/>
<dbReference type="PomBase" id="SPBC3B8.11"/>
<dbReference type="VEuPathDB" id="FungiDB:SPBC3B8.11"/>
<dbReference type="eggNOG" id="ENOG502RS0C">
    <property type="taxonomic scope" value="Eukaryota"/>
</dbReference>
<dbReference type="HOGENOM" id="CLU_322922_0_0_1"/>
<dbReference type="InParanoid" id="O59719"/>
<dbReference type="OMA" id="FDSPFWS"/>
<dbReference type="PRO" id="PR:O59719"/>
<dbReference type="Proteomes" id="UP000002485">
    <property type="component" value="Chromosome II"/>
</dbReference>
<dbReference type="GO" id="GO:0005829">
    <property type="term" value="C:cytosol"/>
    <property type="evidence" value="ECO:0007005"/>
    <property type="project" value="PomBase"/>
</dbReference>
<dbReference type="GO" id="GO:0005634">
    <property type="term" value="C:nucleus"/>
    <property type="evidence" value="ECO:0007005"/>
    <property type="project" value="PomBase"/>
</dbReference>
<dbReference type="GO" id="GO:0070860">
    <property type="term" value="C:RNA polymerase I core factor complex"/>
    <property type="evidence" value="ECO:0000318"/>
    <property type="project" value="GO_Central"/>
</dbReference>
<dbReference type="GO" id="GO:0001181">
    <property type="term" value="F:RNA polymerase I general transcription initiation factor activity"/>
    <property type="evidence" value="ECO:0000266"/>
    <property type="project" value="PomBase"/>
</dbReference>
<dbReference type="GO" id="GO:0001179">
    <property type="term" value="F:RNA polymerase I general transcription initiation factor binding"/>
    <property type="evidence" value="ECO:0000318"/>
    <property type="project" value="GO_Central"/>
</dbReference>
<dbReference type="GO" id="GO:0001163">
    <property type="term" value="F:RNA polymerase I transcription regulatory region sequence-specific DNA binding"/>
    <property type="evidence" value="ECO:0000318"/>
    <property type="project" value="GO_Central"/>
</dbReference>
<dbReference type="GO" id="GO:0042790">
    <property type="term" value="P:nucleolar large rRNA transcription by RNA polymerase I"/>
    <property type="evidence" value="ECO:0000318"/>
    <property type="project" value="GO_Central"/>
</dbReference>
<dbReference type="GO" id="GO:0006361">
    <property type="term" value="P:transcription initiation at RNA polymerase I promoter"/>
    <property type="evidence" value="ECO:0000266"/>
    <property type="project" value="PomBase"/>
</dbReference>
<dbReference type="InterPro" id="IPR019350">
    <property type="entry name" value="RNA_pol_I-sp_TIF_RRN6-like"/>
</dbReference>
<dbReference type="InterPro" id="IPR048535">
    <property type="entry name" value="RRN6_beta-prop"/>
</dbReference>
<dbReference type="InterPro" id="IPR048537">
    <property type="entry name" value="RRN6_HB"/>
</dbReference>
<dbReference type="InterPro" id="IPR048536">
    <property type="entry name" value="Rrn6_K-rich"/>
</dbReference>
<dbReference type="PANTHER" id="PTHR28221">
    <property type="entry name" value="RNA POLYMERASE I-SPECIFIC TRANSCRIPTION INITIATION FACTOR RRN6"/>
    <property type="match status" value="1"/>
</dbReference>
<dbReference type="PANTHER" id="PTHR28221:SF2">
    <property type="entry name" value="RNA POLYMERASE I-SPECIFIC TRANSCRIPTION INITIATION FACTOR RRN6"/>
    <property type="match status" value="1"/>
</dbReference>
<dbReference type="Pfam" id="PF10214">
    <property type="entry name" value="Rrn6_beta-prop"/>
    <property type="match status" value="1"/>
</dbReference>
<dbReference type="Pfam" id="PF20640">
    <property type="entry name" value="Rrn6_HB"/>
    <property type="match status" value="1"/>
</dbReference>
<dbReference type="Pfam" id="PF20639">
    <property type="entry name" value="Rrn6_K-rich"/>
    <property type="match status" value="1"/>
</dbReference>